<comment type="function">
    <text evidence="2 4">Regulatory subunit of Kv4/D (Shal)-type voltage-gated rapidly inactivating A-type potassium channels (PubMed:14572458). Regulates channel density, inactivation kinetics and rate of recovery from inactivation in a calcium-dependent and isoform-specific manner (PubMed:14572458). Modulates KCND2/Kv4.2 currents (PubMed:14572458). In vitro, modulates KCND1/Kv4.1 currents (By similarity). Increases the presence of KCND2 at the cell surface.</text>
</comment>
<comment type="subunit">
    <text evidence="2 6">Component of heteromultimeric potassium channels (PubMed:19713751). Identified in potassium channel complexes containing KCND1, KCND2, KCND3, KCNIP1, KCNIP2, KCNIP3, KCNIP4, DPP6 and DPP10 (PubMed:19713751). Part of a heterooctamer composed of the tetrameric channel and four KCNIP1 chains (By similarity). Probably part of a complex consisting of KCNIP1, KCNIP2 isoform 3 and KCND2. Self-associates to form homodimers and homotetramers. Interacts with KCNIP2 isoform 3 in a calcium-dependent manner. Interacts with KCND2; this interaction mediates the capture of both the N- and C-terminus of KCND2, thus preventing KCND2 N-type inactivation and modulates the channel gating kinetics. Interacts with KCND3; each KCNIP1 monomer interacts with two adjacent KCND3 subunits, through both the N-terminal inactivation ball of a KCND3 subunit and a C-terminal helix from the adjacent KCND3 subunit, clamping them together; this interaction stabilizes the tetrameric form and modulates the channel gating kinetics namely channel activation and inactivation kinetics and rate of recovery from inactivation (By similarity).</text>
</comment>
<comment type="subcellular location">
    <subcellularLocation>
        <location evidence="4">Cell membrane</location>
        <topology evidence="4">Peripheral membrane protein</topology>
    </subcellularLocation>
    <subcellularLocation>
        <location evidence="4">Cytoplasm</location>
    </subcellularLocation>
    <subcellularLocation>
        <location evidence="1">Cell projection</location>
        <location evidence="1">Dendrite</location>
    </subcellularLocation>
</comment>
<comment type="alternative products">
    <event type="alternative splicing"/>
    <isoform>
        <id>Q9JJ57-1</id>
        <name>1</name>
        <name>A</name>
        <name>Kchip1.2</name>
        <name>KCHIP1b</name>
        <sequence type="displayed"/>
    </isoform>
    <isoform>
        <id>Q9JJ57-2</id>
        <name>2</name>
        <name>Kchip1.1</name>
        <name>KCHP1a</name>
        <sequence type="described" ref="VSP_015047"/>
    </isoform>
    <isoform>
        <id>Q9JJ57-3</id>
        <name>3</name>
        <name>Kchip1.2</name>
        <sequence type="described" ref="VSP_015045"/>
    </isoform>
    <isoform>
        <id>Q9JJ57-4</id>
        <name>4</name>
        <sequence type="described" ref="VSP_015046"/>
    </isoform>
</comment>
<comment type="tissue specificity">
    <text evidence="4 5">Expressed in brain. Found in a subpopulation of neurons widely distributed and enriched in Purkinje cells of the cerebellum and in the reticular thalamic and medial habenular nuclei.</text>
</comment>
<comment type="similarity">
    <text evidence="14">Belongs to the recoverin family.</text>
</comment>
<comment type="sequence caution" evidence="14">
    <conflict type="erroneous initiation">
        <sequence resource="EMBL-CDS" id="AAN77492"/>
    </conflict>
    <text>Truncated N-terminus.</text>
</comment>
<reference key="1">
    <citation type="journal article" date="2003" name="Mol. Cell. Neurosci.">
        <title>Differential modulation of Kv4 kinetics by KCHIP1 splice variants.</title>
        <authorList>
            <person name="Van Hoorick D."/>
            <person name="Raes A."/>
            <person name="Keysers W."/>
            <person name="Mayeur E."/>
            <person name="Snyders D.J."/>
        </authorList>
    </citation>
    <scope>NUCLEOTIDE SEQUENCE [MRNA] (ISOFORMS 1 AND 2)</scope>
    <scope>FUNCTION</scope>
    <scope>SUBCELLULAR LOCATION</scope>
    <source>
        <strain>BALB/cJ</strain>
    </source>
</reference>
<reference key="2">
    <citation type="submission" date="2001-12" db="EMBL/GenBank/DDBJ databases">
        <authorList>
            <person name="Ohya S."/>
            <person name="Horowitz B."/>
        </authorList>
    </citation>
    <scope>NUCLEOTIDE SEQUENCE [MRNA] (ISOFORM 2)</scope>
    <source>
        <strain>BALB/cJ</strain>
        <tissue>Brain</tissue>
    </source>
</reference>
<reference key="3">
    <citation type="submission" date="2004-06" db="EMBL/GenBank/DDBJ databases">
        <authorList>
            <person name="Xia K.U."/>
            <person name="Fang H.Y."/>
            <person name="Zhong X.Y."/>
            <person name="Xia J.H."/>
            <person name="Zhang Z.H."/>
        </authorList>
    </citation>
    <scope>NUCLEOTIDE SEQUENCE [MRNA] (ISOFORM 2)</scope>
    <source>
        <strain>Swiss Webster</strain>
    </source>
</reference>
<reference key="4">
    <citation type="submission" date="2004-06" db="EMBL/GenBank/DDBJ databases">
        <authorList>
            <person name="Fang H.Y."/>
            <person name="Xia K."/>
            <person name="Xia J.H."/>
            <person name="Zhang Z.H."/>
        </authorList>
    </citation>
    <scope>NUCLEOTIDE SEQUENCE [MRNA] (ISOFORM 3)</scope>
    <source>
        <strain>Swiss Webster</strain>
    </source>
</reference>
<reference key="5">
    <citation type="journal article" date="2005" name="Science">
        <title>The transcriptional landscape of the mammalian genome.</title>
        <authorList>
            <person name="Carninci P."/>
            <person name="Kasukawa T."/>
            <person name="Katayama S."/>
            <person name="Gough J."/>
            <person name="Frith M.C."/>
            <person name="Maeda N."/>
            <person name="Oyama R."/>
            <person name="Ravasi T."/>
            <person name="Lenhard B."/>
            <person name="Wells C."/>
            <person name="Kodzius R."/>
            <person name="Shimokawa K."/>
            <person name="Bajic V.B."/>
            <person name="Brenner S.E."/>
            <person name="Batalov S."/>
            <person name="Forrest A.R."/>
            <person name="Zavolan M."/>
            <person name="Davis M.J."/>
            <person name="Wilming L.G."/>
            <person name="Aidinis V."/>
            <person name="Allen J.E."/>
            <person name="Ambesi-Impiombato A."/>
            <person name="Apweiler R."/>
            <person name="Aturaliya R.N."/>
            <person name="Bailey T.L."/>
            <person name="Bansal M."/>
            <person name="Baxter L."/>
            <person name="Beisel K.W."/>
            <person name="Bersano T."/>
            <person name="Bono H."/>
            <person name="Chalk A.M."/>
            <person name="Chiu K.P."/>
            <person name="Choudhary V."/>
            <person name="Christoffels A."/>
            <person name="Clutterbuck D.R."/>
            <person name="Crowe M.L."/>
            <person name="Dalla E."/>
            <person name="Dalrymple B.P."/>
            <person name="de Bono B."/>
            <person name="Della Gatta G."/>
            <person name="di Bernardo D."/>
            <person name="Down T."/>
            <person name="Engstrom P."/>
            <person name="Fagiolini M."/>
            <person name="Faulkner G."/>
            <person name="Fletcher C.F."/>
            <person name="Fukushima T."/>
            <person name="Furuno M."/>
            <person name="Futaki S."/>
            <person name="Gariboldi M."/>
            <person name="Georgii-Hemming P."/>
            <person name="Gingeras T.R."/>
            <person name="Gojobori T."/>
            <person name="Green R.E."/>
            <person name="Gustincich S."/>
            <person name="Harbers M."/>
            <person name="Hayashi Y."/>
            <person name="Hensch T.K."/>
            <person name="Hirokawa N."/>
            <person name="Hill D."/>
            <person name="Huminiecki L."/>
            <person name="Iacono M."/>
            <person name="Ikeo K."/>
            <person name="Iwama A."/>
            <person name="Ishikawa T."/>
            <person name="Jakt M."/>
            <person name="Kanapin A."/>
            <person name="Katoh M."/>
            <person name="Kawasawa Y."/>
            <person name="Kelso J."/>
            <person name="Kitamura H."/>
            <person name="Kitano H."/>
            <person name="Kollias G."/>
            <person name="Krishnan S.P."/>
            <person name="Kruger A."/>
            <person name="Kummerfeld S.K."/>
            <person name="Kurochkin I.V."/>
            <person name="Lareau L.F."/>
            <person name="Lazarevic D."/>
            <person name="Lipovich L."/>
            <person name="Liu J."/>
            <person name="Liuni S."/>
            <person name="McWilliam S."/>
            <person name="Madan Babu M."/>
            <person name="Madera M."/>
            <person name="Marchionni L."/>
            <person name="Matsuda H."/>
            <person name="Matsuzawa S."/>
            <person name="Miki H."/>
            <person name="Mignone F."/>
            <person name="Miyake S."/>
            <person name="Morris K."/>
            <person name="Mottagui-Tabar S."/>
            <person name="Mulder N."/>
            <person name="Nakano N."/>
            <person name="Nakauchi H."/>
            <person name="Ng P."/>
            <person name="Nilsson R."/>
            <person name="Nishiguchi S."/>
            <person name="Nishikawa S."/>
            <person name="Nori F."/>
            <person name="Ohara O."/>
            <person name="Okazaki Y."/>
            <person name="Orlando V."/>
            <person name="Pang K.C."/>
            <person name="Pavan W.J."/>
            <person name="Pavesi G."/>
            <person name="Pesole G."/>
            <person name="Petrovsky N."/>
            <person name="Piazza S."/>
            <person name="Reed J."/>
            <person name="Reid J.F."/>
            <person name="Ring B.Z."/>
            <person name="Ringwald M."/>
            <person name="Rost B."/>
            <person name="Ruan Y."/>
            <person name="Salzberg S.L."/>
            <person name="Sandelin A."/>
            <person name="Schneider C."/>
            <person name="Schoenbach C."/>
            <person name="Sekiguchi K."/>
            <person name="Semple C.A."/>
            <person name="Seno S."/>
            <person name="Sessa L."/>
            <person name="Sheng Y."/>
            <person name="Shibata Y."/>
            <person name="Shimada H."/>
            <person name="Shimada K."/>
            <person name="Silva D."/>
            <person name="Sinclair B."/>
            <person name="Sperling S."/>
            <person name="Stupka E."/>
            <person name="Sugiura K."/>
            <person name="Sultana R."/>
            <person name="Takenaka Y."/>
            <person name="Taki K."/>
            <person name="Tammoja K."/>
            <person name="Tan S.L."/>
            <person name="Tang S."/>
            <person name="Taylor M.S."/>
            <person name="Tegner J."/>
            <person name="Teichmann S.A."/>
            <person name="Ueda H.R."/>
            <person name="van Nimwegen E."/>
            <person name="Verardo R."/>
            <person name="Wei C.L."/>
            <person name="Yagi K."/>
            <person name="Yamanishi H."/>
            <person name="Zabarovsky E."/>
            <person name="Zhu S."/>
            <person name="Zimmer A."/>
            <person name="Hide W."/>
            <person name="Bult C."/>
            <person name="Grimmond S.M."/>
            <person name="Teasdale R.D."/>
            <person name="Liu E.T."/>
            <person name="Brusic V."/>
            <person name="Quackenbush J."/>
            <person name="Wahlestedt C."/>
            <person name="Mattick J.S."/>
            <person name="Hume D.A."/>
            <person name="Kai C."/>
            <person name="Sasaki D."/>
            <person name="Tomaru Y."/>
            <person name="Fukuda S."/>
            <person name="Kanamori-Katayama M."/>
            <person name="Suzuki M."/>
            <person name="Aoki J."/>
            <person name="Arakawa T."/>
            <person name="Iida J."/>
            <person name="Imamura K."/>
            <person name="Itoh M."/>
            <person name="Kato T."/>
            <person name="Kawaji H."/>
            <person name="Kawagashira N."/>
            <person name="Kawashima T."/>
            <person name="Kojima M."/>
            <person name="Kondo S."/>
            <person name="Konno H."/>
            <person name="Nakano K."/>
            <person name="Ninomiya N."/>
            <person name="Nishio T."/>
            <person name="Okada M."/>
            <person name="Plessy C."/>
            <person name="Shibata K."/>
            <person name="Shiraki T."/>
            <person name="Suzuki S."/>
            <person name="Tagami M."/>
            <person name="Waki K."/>
            <person name="Watahiki A."/>
            <person name="Okamura-Oho Y."/>
            <person name="Suzuki H."/>
            <person name="Kawai J."/>
            <person name="Hayashizaki Y."/>
        </authorList>
    </citation>
    <scope>NUCLEOTIDE SEQUENCE [LARGE SCALE MRNA] (ISOFORMS 1 AND 4)</scope>
    <source>
        <strain>C57BL/6J</strain>
        <tissue>Corpora quadrigemina</tissue>
        <tissue>Head</tissue>
    </source>
</reference>
<reference key="6">
    <citation type="journal article" date="2009" name="PLoS Biol.">
        <title>Lineage-specific biology revealed by a finished genome assembly of the mouse.</title>
        <authorList>
            <person name="Church D.M."/>
            <person name="Goodstadt L."/>
            <person name="Hillier L.W."/>
            <person name="Zody M.C."/>
            <person name="Goldstein S."/>
            <person name="She X."/>
            <person name="Bult C.J."/>
            <person name="Agarwala R."/>
            <person name="Cherry J.L."/>
            <person name="DiCuccio M."/>
            <person name="Hlavina W."/>
            <person name="Kapustin Y."/>
            <person name="Meric P."/>
            <person name="Maglott D."/>
            <person name="Birtle Z."/>
            <person name="Marques A.C."/>
            <person name="Graves T."/>
            <person name="Zhou S."/>
            <person name="Teague B."/>
            <person name="Potamousis K."/>
            <person name="Churas C."/>
            <person name="Place M."/>
            <person name="Herschleb J."/>
            <person name="Runnheim R."/>
            <person name="Forrest D."/>
            <person name="Amos-Landgraf J."/>
            <person name="Schwartz D.C."/>
            <person name="Cheng Z."/>
            <person name="Lindblad-Toh K."/>
            <person name="Eichler E.E."/>
            <person name="Ponting C.P."/>
        </authorList>
    </citation>
    <scope>NUCLEOTIDE SEQUENCE [LARGE SCALE GENOMIC DNA]</scope>
    <source>
        <strain>C57BL/6J</strain>
    </source>
</reference>
<reference key="7">
    <citation type="journal article" date="2004" name="Genome Res.">
        <title>The status, quality, and expansion of the NIH full-length cDNA project: the Mammalian Gene Collection (MGC).</title>
        <authorList>
            <consortium name="The MGC Project Team"/>
        </authorList>
    </citation>
    <scope>NUCLEOTIDE SEQUENCE [LARGE SCALE MRNA] (ISOFORM 2)</scope>
    <source>
        <tissue>Eye</tissue>
    </source>
</reference>
<reference key="8">
    <citation type="submission" date="2002-06" db="EMBL/GenBank/DDBJ databases">
        <authorList>
            <person name="Franz O."/>
            <person name="Soloviev M."/>
            <person name="Roeper J."/>
        </authorList>
    </citation>
    <scope>NUCLEOTIDE SEQUENCE [MRNA] OF 17-227 (ISOFORM 2)</scope>
</reference>
<reference key="9">
    <citation type="journal article" date="2004" name="Brain Res. Mol. Brain Res.">
        <title>Differential distribution of KChIPs mRNAs in adult mouse brain.</title>
        <authorList>
            <person name="Xiong H."/>
            <person name="Kovacs I."/>
            <person name="Zhang Z."/>
        </authorList>
    </citation>
    <scope>TISSUE SPECIFICITY</scope>
</reference>
<reference key="10">
    <citation type="journal article" date="2009" name="Channels">
        <title>Proteomic analyses of native brain K(V)4.2 channel complexes.</title>
        <authorList>
            <person name="Marionneau C."/>
            <person name="LeDuc R.D."/>
            <person name="Rohrs H.W."/>
            <person name="Link A.J."/>
            <person name="Townsend R.R."/>
            <person name="Nerbonne J.M."/>
        </authorList>
    </citation>
    <scope>SUBUNIT</scope>
    <scope>IDENTIFICATION BY MASS SPECTROMETRY</scope>
</reference>
<proteinExistence type="evidence at protein level"/>
<dbReference type="EMBL" id="AY050525">
    <property type="protein sequence ID" value="AAL12488.1"/>
    <property type="molecule type" value="mRNA"/>
</dbReference>
<dbReference type="EMBL" id="AY050526">
    <property type="protein sequence ID" value="AAL12489.1"/>
    <property type="molecule type" value="mRNA"/>
</dbReference>
<dbReference type="EMBL" id="AB075041">
    <property type="protein sequence ID" value="BAB78543.1"/>
    <property type="molecule type" value="mRNA"/>
</dbReference>
<dbReference type="EMBL" id="AY171234">
    <property type="protein sequence ID" value="AAN77492.1"/>
    <property type="status" value="ALT_INIT"/>
    <property type="molecule type" value="mRNA"/>
</dbReference>
<dbReference type="EMBL" id="AY647242">
    <property type="protein sequence ID" value="AAT68468.1"/>
    <property type="molecule type" value="mRNA"/>
</dbReference>
<dbReference type="EMBL" id="AK081845">
    <property type="protein sequence ID" value="BAC38347.1"/>
    <property type="molecule type" value="mRNA"/>
</dbReference>
<dbReference type="EMBL" id="AK045948">
    <property type="protein sequence ID" value="BAC32543.1"/>
    <property type="molecule type" value="mRNA"/>
</dbReference>
<dbReference type="EMBL" id="AK046398">
    <property type="protein sequence ID" value="BAC32705.1"/>
    <property type="molecule type" value="mRNA"/>
</dbReference>
<dbReference type="EMBL" id="AL669814">
    <property type="status" value="NOT_ANNOTATED_CDS"/>
    <property type="molecule type" value="Genomic_DNA"/>
</dbReference>
<dbReference type="EMBL" id="AL731867">
    <property type="status" value="NOT_ANNOTATED_CDS"/>
    <property type="molecule type" value="Genomic_DNA"/>
</dbReference>
<dbReference type="EMBL" id="BC034241">
    <property type="protein sequence ID" value="AAH34241.1"/>
    <property type="molecule type" value="mRNA"/>
</dbReference>
<dbReference type="EMBL" id="AJ278534">
    <property type="protein sequence ID" value="CAC82025.1"/>
    <property type="molecule type" value="mRNA"/>
</dbReference>
<dbReference type="CCDS" id="CCDS24537.1">
    <molecule id="Q9JJ57-2"/>
</dbReference>
<dbReference type="CCDS" id="CCDS56766.1">
    <molecule id="Q9JJ57-1"/>
</dbReference>
<dbReference type="CCDS" id="CCDS70160.1">
    <molecule id="Q9JJ57-3"/>
</dbReference>
<dbReference type="RefSeq" id="NP_001177814.1">
    <molecule id="Q9JJ57-1"/>
    <property type="nucleotide sequence ID" value="NM_001190885.3"/>
</dbReference>
<dbReference type="RefSeq" id="NP_001177815.1">
    <property type="nucleotide sequence ID" value="NM_001190886.1"/>
</dbReference>
<dbReference type="RefSeq" id="NP_001277619.1">
    <molecule id="Q9JJ57-3"/>
    <property type="nucleotide sequence ID" value="NM_001290690.3"/>
</dbReference>
<dbReference type="RefSeq" id="NP_081674.2">
    <molecule id="Q9JJ57-2"/>
    <property type="nucleotide sequence ID" value="NM_027398.3"/>
</dbReference>
<dbReference type="RefSeq" id="XP_030102157.1">
    <molecule id="Q9JJ57-3"/>
    <property type="nucleotide sequence ID" value="XM_030246297.1"/>
</dbReference>
<dbReference type="RefSeq" id="XP_030102158.1">
    <molecule id="Q9JJ57-3"/>
    <property type="nucleotide sequence ID" value="XM_030246298.2"/>
</dbReference>
<dbReference type="RefSeq" id="XP_030102159.1">
    <molecule id="Q9JJ57-3"/>
    <property type="nucleotide sequence ID" value="XM_030246299.1"/>
</dbReference>
<dbReference type="RefSeq" id="XP_036012869.1">
    <molecule id="Q9JJ57-3"/>
    <property type="nucleotide sequence ID" value="XM_036156976.1"/>
</dbReference>
<dbReference type="RefSeq" id="XP_036012870.1">
    <molecule id="Q9JJ57-3"/>
    <property type="nucleotide sequence ID" value="XM_036156977.1"/>
</dbReference>
<dbReference type="RefSeq" id="XP_036012871.1">
    <molecule id="Q9JJ57-3"/>
    <property type="nucleotide sequence ID" value="XM_036156978.1"/>
</dbReference>
<dbReference type="SMR" id="Q9JJ57"/>
<dbReference type="ComplexPortal" id="CPX-3262">
    <property type="entry name" value="Kv4.3-KChIP1 channel complex"/>
</dbReference>
<dbReference type="FunCoup" id="Q9JJ57">
    <property type="interactions" value="139"/>
</dbReference>
<dbReference type="IntAct" id="Q9JJ57">
    <property type="interactions" value="1"/>
</dbReference>
<dbReference type="MINT" id="Q9JJ57"/>
<dbReference type="STRING" id="10090.ENSMUSP00000104964"/>
<dbReference type="PaxDb" id="10090-ENSMUSP00000069063"/>
<dbReference type="ProteomicsDB" id="269250">
    <molecule id="Q9JJ57-1"/>
</dbReference>
<dbReference type="ProteomicsDB" id="269251">
    <molecule id="Q9JJ57-2"/>
</dbReference>
<dbReference type="ProteomicsDB" id="269252">
    <molecule id="Q9JJ57-3"/>
</dbReference>
<dbReference type="ProteomicsDB" id="269253">
    <molecule id="Q9JJ57-4"/>
</dbReference>
<dbReference type="ABCD" id="Q9JJ57">
    <property type="antibodies" value="1 sequenced antibody"/>
</dbReference>
<dbReference type="Antibodypedia" id="16893">
    <property type="antibodies" value="316 antibodies from 30 providers"/>
</dbReference>
<dbReference type="DNASU" id="70357"/>
<dbReference type="Ensembl" id="ENSMUST00000065970.6">
    <molecule id="Q9JJ57-2"/>
    <property type="protein sequence ID" value="ENSMUSP00000069063.6"/>
    <property type="gene ID" value="ENSMUSG00000053519.18"/>
</dbReference>
<dbReference type="Ensembl" id="ENSMUST00000101368.9">
    <molecule id="Q9JJ57-3"/>
    <property type="protein sequence ID" value="ENSMUSP00000098919.3"/>
    <property type="gene ID" value="ENSMUSG00000053519.18"/>
</dbReference>
<dbReference type="Ensembl" id="ENSMUST00000109340.9">
    <molecule id="Q9JJ57-1"/>
    <property type="protein sequence ID" value="ENSMUSP00000104964.3"/>
    <property type="gene ID" value="ENSMUSG00000053519.18"/>
</dbReference>
<dbReference type="GeneID" id="70357"/>
<dbReference type="KEGG" id="mmu:70357"/>
<dbReference type="UCSC" id="uc007ikp.2">
    <molecule id="Q9JJ57-1"/>
    <property type="organism name" value="mouse"/>
</dbReference>
<dbReference type="AGR" id="MGI:1917607"/>
<dbReference type="CTD" id="30820"/>
<dbReference type="MGI" id="MGI:1917607">
    <property type="gene designation" value="Kcnip1"/>
</dbReference>
<dbReference type="VEuPathDB" id="HostDB:ENSMUSG00000053519"/>
<dbReference type="eggNOG" id="KOG0044">
    <property type="taxonomic scope" value="Eukaryota"/>
</dbReference>
<dbReference type="GeneTree" id="ENSGT00940000158048"/>
<dbReference type="HOGENOM" id="CLU_072366_2_2_1"/>
<dbReference type="InParanoid" id="Q9JJ57"/>
<dbReference type="OMA" id="YRGFKNX"/>
<dbReference type="PhylomeDB" id="Q9JJ57"/>
<dbReference type="TreeFam" id="TF318560"/>
<dbReference type="Reactome" id="R-MMU-5576894">
    <property type="pathway name" value="Phase 1 - inactivation of fast Na+ channels"/>
</dbReference>
<dbReference type="BioGRID-ORCS" id="70357">
    <property type="hits" value="2 hits in 78 CRISPR screens"/>
</dbReference>
<dbReference type="ChiTaRS" id="Kcnip1">
    <property type="organism name" value="mouse"/>
</dbReference>
<dbReference type="PRO" id="PR:Q9JJ57"/>
<dbReference type="Proteomes" id="UP000000589">
    <property type="component" value="Chromosome 11"/>
</dbReference>
<dbReference type="RNAct" id="Q9JJ57">
    <property type="molecule type" value="protein"/>
</dbReference>
<dbReference type="Bgee" id="ENSMUSG00000053519">
    <property type="expression patterns" value="Expressed in habenula and 138 other cell types or tissues"/>
</dbReference>
<dbReference type="ExpressionAtlas" id="Q9JJ57">
    <property type="expression patterns" value="baseline and differential"/>
</dbReference>
<dbReference type="GO" id="GO:0005737">
    <property type="term" value="C:cytoplasm"/>
    <property type="evidence" value="ECO:0000250"/>
    <property type="project" value="UniProtKB"/>
</dbReference>
<dbReference type="GO" id="GO:0009898">
    <property type="term" value="C:cytoplasmic side of plasma membrane"/>
    <property type="evidence" value="ECO:0000250"/>
    <property type="project" value="UniProtKB"/>
</dbReference>
<dbReference type="GO" id="GO:0030425">
    <property type="term" value="C:dendrite"/>
    <property type="evidence" value="ECO:0007669"/>
    <property type="project" value="UniProtKB-SubCell"/>
</dbReference>
<dbReference type="GO" id="GO:0071196">
    <property type="term" value="C:Kv4.3-KChIP1 channel complex"/>
    <property type="evidence" value="ECO:0000266"/>
    <property type="project" value="ComplexPortal"/>
</dbReference>
<dbReference type="GO" id="GO:0045202">
    <property type="term" value="C:synapse"/>
    <property type="evidence" value="ECO:0007669"/>
    <property type="project" value="GOC"/>
</dbReference>
<dbReference type="GO" id="GO:0008076">
    <property type="term" value="C:voltage-gated potassium channel complex"/>
    <property type="evidence" value="ECO:0000314"/>
    <property type="project" value="UniProtKB"/>
</dbReference>
<dbReference type="GO" id="GO:0005509">
    <property type="term" value="F:calcium ion binding"/>
    <property type="evidence" value="ECO:0000250"/>
    <property type="project" value="UniProtKB"/>
</dbReference>
<dbReference type="GO" id="GO:0005267">
    <property type="term" value="F:potassium channel activity"/>
    <property type="evidence" value="ECO:0007669"/>
    <property type="project" value="UniProtKB-KW"/>
</dbReference>
<dbReference type="GO" id="GO:0015459">
    <property type="term" value="F:potassium channel regulator activity"/>
    <property type="evidence" value="ECO:0000250"/>
    <property type="project" value="UniProtKB"/>
</dbReference>
<dbReference type="GO" id="GO:0007268">
    <property type="term" value="P:chemical synaptic transmission"/>
    <property type="evidence" value="ECO:0000303"/>
    <property type="project" value="ComplexPortal"/>
</dbReference>
<dbReference type="GO" id="GO:0086009">
    <property type="term" value="P:membrane repolarization"/>
    <property type="evidence" value="ECO:0000303"/>
    <property type="project" value="ComplexPortal"/>
</dbReference>
<dbReference type="GO" id="GO:0006936">
    <property type="term" value="P:muscle contraction"/>
    <property type="evidence" value="ECO:0000303"/>
    <property type="project" value="ComplexPortal"/>
</dbReference>
<dbReference type="GO" id="GO:0097623">
    <property type="term" value="P:potassium ion export across plasma membrane"/>
    <property type="evidence" value="ECO:0000303"/>
    <property type="project" value="ComplexPortal"/>
</dbReference>
<dbReference type="GO" id="GO:0008016">
    <property type="term" value="P:regulation of heart contraction"/>
    <property type="evidence" value="ECO:0000303"/>
    <property type="project" value="ComplexPortal"/>
</dbReference>
<dbReference type="GO" id="GO:1901379">
    <property type="term" value="P:regulation of potassium ion transmembrane transport"/>
    <property type="evidence" value="ECO:0000250"/>
    <property type="project" value="UniProtKB"/>
</dbReference>
<dbReference type="CDD" id="cd00051">
    <property type="entry name" value="EFh"/>
    <property type="match status" value="2"/>
</dbReference>
<dbReference type="FunFam" id="1.10.238.10:FF:000043">
    <property type="entry name" value="Kv channel-interacting protein 1 isoform 2"/>
    <property type="match status" value="1"/>
</dbReference>
<dbReference type="Gene3D" id="1.10.238.10">
    <property type="entry name" value="EF-hand"/>
    <property type="match status" value="1"/>
</dbReference>
<dbReference type="InterPro" id="IPR011992">
    <property type="entry name" value="EF-hand-dom_pair"/>
</dbReference>
<dbReference type="InterPro" id="IPR018247">
    <property type="entry name" value="EF_Hand_1_Ca_BS"/>
</dbReference>
<dbReference type="InterPro" id="IPR002048">
    <property type="entry name" value="EF_hand_dom"/>
</dbReference>
<dbReference type="InterPro" id="IPR028846">
    <property type="entry name" value="Recoverin"/>
</dbReference>
<dbReference type="PANTHER" id="PTHR23055">
    <property type="entry name" value="CALCIUM BINDING PROTEINS"/>
    <property type="match status" value="1"/>
</dbReference>
<dbReference type="PANTHER" id="PTHR23055:SF82">
    <property type="entry name" value="KV CHANNEL-INTERACTING PROTEIN 1"/>
    <property type="match status" value="1"/>
</dbReference>
<dbReference type="Pfam" id="PF13499">
    <property type="entry name" value="EF-hand_7"/>
    <property type="match status" value="1"/>
</dbReference>
<dbReference type="Pfam" id="PF13833">
    <property type="entry name" value="EF-hand_8"/>
    <property type="match status" value="1"/>
</dbReference>
<dbReference type="PRINTS" id="PR00450">
    <property type="entry name" value="RECOVERIN"/>
</dbReference>
<dbReference type="SMART" id="SM00054">
    <property type="entry name" value="EFh"/>
    <property type="match status" value="3"/>
</dbReference>
<dbReference type="SUPFAM" id="SSF47473">
    <property type="entry name" value="EF-hand"/>
    <property type="match status" value="1"/>
</dbReference>
<dbReference type="PROSITE" id="PS00018">
    <property type="entry name" value="EF_HAND_1"/>
    <property type="match status" value="2"/>
</dbReference>
<dbReference type="PROSITE" id="PS50222">
    <property type="entry name" value="EF_HAND_2"/>
    <property type="match status" value="3"/>
</dbReference>
<keyword id="KW-0025">Alternative splicing</keyword>
<keyword id="KW-0106">Calcium</keyword>
<keyword id="KW-1003">Cell membrane</keyword>
<keyword id="KW-0966">Cell projection</keyword>
<keyword id="KW-0963">Cytoplasm</keyword>
<keyword id="KW-0407">Ion channel</keyword>
<keyword id="KW-0406">Ion transport</keyword>
<keyword id="KW-0472">Membrane</keyword>
<keyword id="KW-0479">Metal-binding</keyword>
<keyword id="KW-0630">Potassium</keyword>
<keyword id="KW-0631">Potassium channel</keyword>
<keyword id="KW-0633">Potassium transport</keyword>
<keyword id="KW-1185">Reference proteome</keyword>
<keyword id="KW-0677">Repeat</keyword>
<keyword id="KW-0813">Transport</keyword>
<keyword id="KW-0851">Voltage-gated channel</keyword>
<feature type="chain" id="PRO_0000073819" description="A-type potassium channel modulatory protein KCNIP1">
    <location>
        <begin position="1"/>
        <end position="227"/>
    </location>
</feature>
<feature type="domain" description="EF-hand 1; degenerate" evidence="14">
    <location>
        <begin position="38"/>
        <end position="94"/>
    </location>
</feature>
<feature type="domain" description="EF-hand 2" evidence="3">
    <location>
        <begin position="97"/>
        <end position="132"/>
    </location>
</feature>
<feature type="domain" description="EF-hand 3" evidence="3">
    <location>
        <begin position="133"/>
        <end position="168"/>
    </location>
</feature>
<feature type="domain" description="EF-hand 4" evidence="3">
    <location>
        <begin position="181"/>
        <end position="216"/>
    </location>
</feature>
<feature type="region of interest" description="Interaction with KCND2" evidence="1">
    <location>
        <begin position="214"/>
        <end position="227"/>
    </location>
</feature>
<feature type="binding site" evidence="3">
    <location>
        <position position="146"/>
    </location>
    <ligand>
        <name>Ca(2+)</name>
        <dbReference type="ChEBI" id="CHEBI:29108"/>
        <label>1</label>
    </ligand>
</feature>
<feature type="binding site" evidence="3">
    <location>
        <position position="148"/>
    </location>
    <ligand>
        <name>Ca(2+)</name>
        <dbReference type="ChEBI" id="CHEBI:29108"/>
        <label>1</label>
    </ligand>
</feature>
<feature type="binding site" evidence="3">
    <location>
        <position position="150"/>
    </location>
    <ligand>
        <name>Ca(2+)</name>
        <dbReference type="ChEBI" id="CHEBI:29108"/>
        <label>1</label>
    </ligand>
</feature>
<feature type="binding site" evidence="3">
    <location>
        <position position="152"/>
    </location>
    <ligand>
        <name>Ca(2+)</name>
        <dbReference type="ChEBI" id="CHEBI:29108"/>
        <label>1</label>
    </ligand>
</feature>
<feature type="binding site" evidence="3">
    <location>
        <position position="157"/>
    </location>
    <ligand>
        <name>Ca(2+)</name>
        <dbReference type="ChEBI" id="CHEBI:29108"/>
        <label>1</label>
    </ligand>
</feature>
<feature type="binding site" evidence="3">
    <location>
        <position position="194"/>
    </location>
    <ligand>
        <name>Ca(2+)</name>
        <dbReference type="ChEBI" id="CHEBI:29108"/>
        <label>2</label>
    </ligand>
</feature>
<feature type="binding site" evidence="3">
    <location>
        <position position="196"/>
    </location>
    <ligand>
        <name>Ca(2+)</name>
        <dbReference type="ChEBI" id="CHEBI:29108"/>
        <label>2</label>
    </ligand>
</feature>
<feature type="binding site" evidence="3">
    <location>
        <position position="198"/>
    </location>
    <ligand>
        <name>Ca(2+)</name>
        <dbReference type="ChEBI" id="CHEBI:29108"/>
        <label>2</label>
    </ligand>
</feature>
<feature type="binding site" evidence="3">
    <location>
        <position position="205"/>
    </location>
    <ligand>
        <name>Ca(2+)</name>
        <dbReference type="ChEBI" id="CHEBI:29108"/>
        <label>2</label>
    </ligand>
</feature>
<feature type="splice variant" id="VSP_015045" description="In isoform 3." evidence="12">
    <location>
        <begin position="1"/>
        <end position="39"/>
    </location>
</feature>
<feature type="splice variant" id="VSP_015046" description="In isoform 4." evidence="9">
    <original>MGAVMGTFSSLQTKQRRP</original>
    <variation>MSSCSKRCRLGFVKFAQTIFKLITGTL</variation>
    <location>
        <begin position="1"/>
        <end position="18"/>
    </location>
</feature>
<feature type="splice variant" id="VSP_015047" description="In isoform 2." evidence="7 8 10 11 13">
    <location>
        <begin position="21"/>
        <end position="31"/>
    </location>
</feature>
<feature type="sequence conflict" description="In Ref. 1; AAL12488." evidence="14" ref="1">
    <original>I</original>
    <variation>L</variation>
    <location>
        <position position="147"/>
    </location>
</feature>
<feature type="sequence conflict" description="In Ref. 3; AAT68468." evidence="14" ref="3">
    <original>H</original>
    <variation>R</variation>
    <location>
        <position position="185"/>
    </location>
</feature>
<name>KCIP1_MOUSE</name>
<organism>
    <name type="scientific">Mus musculus</name>
    <name type="common">Mouse</name>
    <dbReference type="NCBI Taxonomy" id="10090"/>
    <lineage>
        <taxon>Eukaryota</taxon>
        <taxon>Metazoa</taxon>
        <taxon>Chordata</taxon>
        <taxon>Craniata</taxon>
        <taxon>Vertebrata</taxon>
        <taxon>Euteleostomi</taxon>
        <taxon>Mammalia</taxon>
        <taxon>Eutheria</taxon>
        <taxon>Euarchontoglires</taxon>
        <taxon>Glires</taxon>
        <taxon>Rodentia</taxon>
        <taxon>Myomorpha</taxon>
        <taxon>Muroidea</taxon>
        <taxon>Muridae</taxon>
        <taxon>Murinae</taxon>
        <taxon>Mus</taxon>
        <taxon>Mus</taxon>
    </lineage>
</organism>
<sequence length="227" mass="26831">MGAVMGTFSSLQTKQRRPSKDIAWWYYQYQRDKIEDELEMTMVCHRPEGLEQLEAQTNFTKRELQVLYRGFKNECPSGVVNEETFKQIYAQFFPHGDASTYAHYLFNAFDTTQTGSVKFEDFVTALSILLRGTVHEKLRWTFNLYDINKDGYINKEEMMDIVKAIYDMMGKYTYPVLKEDTPRQHVDVFFQKMDKNKDGIVTLDEFLESCQEDDNIMRSLQLFQNVM</sequence>
<accession>Q9JJ57</accession>
<accession>Q5SSA3</accession>
<accession>Q6DTJ1</accession>
<accession>Q8BGJ4</accession>
<accession>Q8C4K4</accession>
<accession>Q8CGL1</accession>
<accession>Q8K1U1</accession>
<accession>Q8K3M2</accession>
<gene>
    <name evidence="15" type="primary">Kcnip1</name>
    <name evidence="7" type="synonym">Kchip1</name>
</gene>
<protein>
    <recommendedName>
        <fullName evidence="14">A-type potassium channel modulatory protein KCNIP1</fullName>
    </recommendedName>
    <alternativeName>
        <fullName>Kv channel-interacting protein 1</fullName>
        <shortName evidence="7">KChIP1</shortName>
    </alternativeName>
    <alternativeName>
        <fullName>Potassium channel-interacting protein 1</fullName>
    </alternativeName>
</protein>
<evidence type="ECO:0000250" key="1">
    <source>
        <dbReference type="UniProtKB" id="Q8R426"/>
    </source>
</evidence>
<evidence type="ECO:0000250" key="2">
    <source>
        <dbReference type="UniProtKB" id="Q9NZI2"/>
    </source>
</evidence>
<evidence type="ECO:0000255" key="3">
    <source>
        <dbReference type="PROSITE-ProRule" id="PRU00448"/>
    </source>
</evidence>
<evidence type="ECO:0000269" key="4">
    <source>
    </source>
</evidence>
<evidence type="ECO:0000269" key="5">
    <source>
    </source>
</evidence>
<evidence type="ECO:0000269" key="6">
    <source>
    </source>
</evidence>
<evidence type="ECO:0000303" key="7">
    <source>
    </source>
</evidence>
<evidence type="ECO:0000303" key="8">
    <source>
    </source>
</evidence>
<evidence type="ECO:0000303" key="9">
    <source>
    </source>
</evidence>
<evidence type="ECO:0000303" key="10">
    <source ref="2"/>
</evidence>
<evidence type="ECO:0000303" key="11">
    <source ref="3"/>
</evidence>
<evidence type="ECO:0000303" key="12">
    <source ref="4"/>
</evidence>
<evidence type="ECO:0000303" key="13">
    <source ref="8"/>
</evidence>
<evidence type="ECO:0000305" key="14"/>
<evidence type="ECO:0000312" key="15">
    <source>
        <dbReference type="MGI" id="MGI:1917607"/>
    </source>
</evidence>